<proteinExistence type="inferred from homology"/>
<gene>
    <name evidence="1" type="primary">mnmE</name>
    <name evidence="1" type="synonym">thdF</name>
    <name evidence="1" type="synonym">trmE</name>
    <name type="ordered locus">SF3758</name>
    <name type="ordered locus">S4013</name>
</gene>
<keyword id="KW-0963">Cytoplasm</keyword>
<keyword id="KW-0342">GTP-binding</keyword>
<keyword id="KW-0378">Hydrolase</keyword>
<keyword id="KW-0460">Magnesium</keyword>
<keyword id="KW-0479">Metal-binding</keyword>
<keyword id="KW-0547">Nucleotide-binding</keyword>
<keyword id="KW-0630">Potassium</keyword>
<keyword id="KW-1185">Reference proteome</keyword>
<keyword id="KW-0819">tRNA processing</keyword>
<comment type="function">
    <text evidence="1">Exhibits a very high intrinsic GTPase hydrolysis rate. Involved in the addition of a carboxymethylaminomethyl (cmnm) group at the wobble position (U34) of certain tRNAs, forming tRNA-cmnm(5)s(2)U34.</text>
</comment>
<comment type="cofactor">
    <cofactor evidence="1">
        <name>K(+)</name>
        <dbReference type="ChEBI" id="CHEBI:29103"/>
    </cofactor>
    <text evidence="1">Binds 1 potassium ion per subunit.</text>
</comment>
<comment type="subunit">
    <text evidence="1">Homodimer. Heterotetramer of two MnmE and two MnmG subunits.</text>
</comment>
<comment type="subcellular location">
    <subcellularLocation>
        <location evidence="1">Cytoplasm</location>
    </subcellularLocation>
</comment>
<comment type="similarity">
    <text evidence="1">Belongs to the TRAFAC class TrmE-Era-EngA-EngB-Septin-like GTPase superfamily. TrmE GTPase family.</text>
</comment>
<dbReference type="EC" id="3.6.-.-" evidence="1"/>
<dbReference type="EMBL" id="AE005674">
    <property type="protein sequence ID" value="AAN45201.1"/>
    <property type="molecule type" value="Genomic_DNA"/>
</dbReference>
<dbReference type="EMBL" id="AE014073">
    <property type="protein sequence ID" value="AAP18996.1"/>
    <property type="molecule type" value="Genomic_DNA"/>
</dbReference>
<dbReference type="RefSeq" id="NP_709494.1">
    <property type="nucleotide sequence ID" value="NC_004337.2"/>
</dbReference>
<dbReference type="RefSeq" id="WP_001282349.1">
    <property type="nucleotide sequence ID" value="NZ_WPGW01000019.1"/>
</dbReference>
<dbReference type="SMR" id="Q83PL3"/>
<dbReference type="STRING" id="198214.SF3758"/>
<dbReference type="PaxDb" id="198214-SF3758"/>
<dbReference type="GeneID" id="1026096"/>
<dbReference type="KEGG" id="sfl:SF3758"/>
<dbReference type="KEGG" id="sfx:S4013"/>
<dbReference type="PATRIC" id="fig|198214.7.peg.4435"/>
<dbReference type="HOGENOM" id="CLU_019624_4_1_6"/>
<dbReference type="Proteomes" id="UP000001006">
    <property type="component" value="Chromosome"/>
</dbReference>
<dbReference type="Proteomes" id="UP000002673">
    <property type="component" value="Chromosome"/>
</dbReference>
<dbReference type="GO" id="GO:0005829">
    <property type="term" value="C:cytosol"/>
    <property type="evidence" value="ECO:0007669"/>
    <property type="project" value="TreeGrafter"/>
</dbReference>
<dbReference type="GO" id="GO:0005525">
    <property type="term" value="F:GTP binding"/>
    <property type="evidence" value="ECO:0007669"/>
    <property type="project" value="UniProtKB-UniRule"/>
</dbReference>
<dbReference type="GO" id="GO:0003924">
    <property type="term" value="F:GTPase activity"/>
    <property type="evidence" value="ECO:0007669"/>
    <property type="project" value="UniProtKB-UniRule"/>
</dbReference>
<dbReference type="GO" id="GO:0046872">
    <property type="term" value="F:metal ion binding"/>
    <property type="evidence" value="ECO:0007669"/>
    <property type="project" value="UniProtKB-KW"/>
</dbReference>
<dbReference type="GO" id="GO:0030488">
    <property type="term" value="P:tRNA methylation"/>
    <property type="evidence" value="ECO:0007669"/>
    <property type="project" value="TreeGrafter"/>
</dbReference>
<dbReference type="GO" id="GO:0002098">
    <property type="term" value="P:tRNA wobble uridine modification"/>
    <property type="evidence" value="ECO:0007669"/>
    <property type="project" value="TreeGrafter"/>
</dbReference>
<dbReference type="CDD" id="cd04164">
    <property type="entry name" value="trmE"/>
    <property type="match status" value="1"/>
</dbReference>
<dbReference type="CDD" id="cd14858">
    <property type="entry name" value="TrmE_N"/>
    <property type="match status" value="1"/>
</dbReference>
<dbReference type="FunFam" id="3.30.1360.120:FF:000001">
    <property type="entry name" value="tRNA modification GTPase MnmE"/>
    <property type="match status" value="1"/>
</dbReference>
<dbReference type="FunFam" id="3.40.50.300:FF:000249">
    <property type="entry name" value="tRNA modification GTPase MnmE"/>
    <property type="match status" value="1"/>
</dbReference>
<dbReference type="Gene3D" id="3.40.50.300">
    <property type="entry name" value="P-loop containing nucleotide triphosphate hydrolases"/>
    <property type="match status" value="1"/>
</dbReference>
<dbReference type="Gene3D" id="3.30.1360.120">
    <property type="entry name" value="Probable tRNA modification gtpase trme, domain 1"/>
    <property type="match status" value="1"/>
</dbReference>
<dbReference type="Gene3D" id="1.20.120.430">
    <property type="entry name" value="tRNA modification GTPase MnmE domain 2"/>
    <property type="match status" value="1"/>
</dbReference>
<dbReference type="HAMAP" id="MF_00379">
    <property type="entry name" value="GTPase_MnmE"/>
    <property type="match status" value="1"/>
</dbReference>
<dbReference type="InterPro" id="IPR031168">
    <property type="entry name" value="G_TrmE"/>
</dbReference>
<dbReference type="InterPro" id="IPR006073">
    <property type="entry name" value="GTP-bd"/>
</dbReference>
<dbReference type="InterPro" id="IPR018948">
    <property type="entry name" value="GTP-bd_TrmE_N"/>
</dbReference>
<dbReference type="InterPro" id="IPR004520">
    <property type="entry name" value="GTPase_MnmE"/>
</dbReference>
<dbReference type="InterPro" id="IPR027368">
    <property type="entry name" value="MnmE_dom2"/>
</dbReference>
<dbReference type="InterPro" id="IPR025867">
    <property type="entry name" value="MnmE_helical"/>
</dbReference>
<dbReference type="InterPro" id="IPR027417">
    <property type="entry name" value="P-loop_NTPase"/>
</dbReference>
<dbReference type="InterPro" id="IPR005225">
    <property type="entry name" value="Small_GTP-bd"/>
</dbReference>
<dbReference type="InterPro" id="IPR027266">
    <property type="entry name" value="TrmE/GcvT_dom1"/>
</dbReference>
<dbReference type="NCBIfam" id="TIGR00450">
    <property type="entry name" value="mnmE_trmE_thdF"/>
    <property type="match status" value="1"/>
</dbReference>
<dbReference type="NCBIfam" id="NF003661">
    <property type="entry name" value="PRK05291.1-3"/>
    <property type="match status" value="1"/>
</dbReference>
<dbReference type="NCBIfam" id="TIGR00231">
    <property type="entry name" value="small_GTP"/>
    <property type="match status" value="1"/>
</dbReference>
<dbReference type="PANTHER" id="PTHR42714">
    <property type="entry name" value="TRNA MODIFICATION GTPASE GTPBP3"/>
    <property type="match status" value="1"/>
</dbReference>
<dbReference type="PANTHER" id="PTHR42714:SF2">
    <property type="entry name" value="TRNA MODIFICATION GTPASE GTPBP3, MITOCHONDRIAL"/>
    <property type="match status" value="1"/>
</dbReference>
<dbReference type="Pfam" id="PF01926">
    <property type="entry name" value="MMR_HSR1"/>
    <property type="match status" value="1"/>
</dbReference>
<dbReference type="Pfam" id="PF12631">
    <property type="entry name" value="MnmE_helical"/>
    <property type="match status" value="1"/>
</dbReference>
<dbReference type="Pfam" id="PF10396">
    <property type="entry name" value="TrmE_N"/>
    <property type="match status" value="1"/>
</dbReference>
<dbReference type="SUPFAM" id="SSF52540">
    <property type="entry name" value="P-loop containing nucleoside triphosphate hydrolases"/>
    <property type="match status" value="1"/>
</dbReference>
<dbReference type="SUPFAM" id="SSF116878">
    <property type="entry name" value="TrmE connector domain"/>
    <property type="match status" value="1"/>
</dbReference>
<dbReference type="PROSITE" id="PS51709">
    <property type="entry name" value="G_TRME"/>
    <property type="match status" value="1"/>
</dbReference>
<name>MNME_SHIFL</name>
<sequence>MSDNDTIVAQATPPGRGGVGILRISGFKAREVAETVLGKLPKPRYADYLPFKDADGSVLDQGIALWFPGPNSFTGEDVLELQGHGGPVILDLLLKRILTIPGLRIARPGEFSERAFLNDKLDLAQAEAIADLIDASSEQAARSALNSLQGAFSARVNHLVEALTHLRIYVEAAIDFPDEEIDFLSDGKIEAQLNDVMADLDAVRAEARQGSLLREGMKVVIAGRPNAGKSSLLNALAGREAAIVTDIAGTTRDVLREHIHIDGMPLHIIDTAGLREASDEVERIGIERAWQEIEQADRVLFMVDGTTTDAVDPAEIWPEFIARLPAKLPITVVRNKADITGETLGMSEVNGHALIRLSARTGEGVDVLRNHLKQSMGFDTNMEGGFLARRRHLQALEQAAEHLQQGKAQLLGAWAGELLAEELRLAQQNLSEITGEFTSDDLLGRIFSSFCIGK</sequence>
<accession>Q83PL3</accession>
<reference key="1">
    <citation type="journal article" date="2002" name="Nucleic Acids Res.">
        <title>Genome sequence of Shigella flexneri 2a: insights into pathogenicity through comparison with genomes of Escherichia coli K12 and O157.</title>
        <authorList>
            <person name="Jin Q."/>
            <person name="Yuan Z."/>
            <person name="Xu J."/>
            <person name="Wang Y."/>
            <person name="Shen Y."/>
            <person name="Lu W."/>
            <person name="Wang J."/>
            <person name="Liu H."/>
            <person name="Yang J."/>
            <person name="Yang F."/>
            <person name="Zhang X."/>
            <person name="Zhang J."/>
            <person name="Yang G."/>
            <person name="Wu H."/>
            <person name="Qu D."/>
            <person name="Dong J."/>
            <person name="Sun L."/>
            <person name="Xue Y."/>
            <person name="Zhao A."/>
            <person name="Gao Y."/>
            <person name="Zhu J."/>
            <person name="Kan B."/>
            <person name="Ding K."/>
            <person name="Chen S."/>
            <person name="Cheng H."/>
            <person name="Yao Z."/>
            <person name="He B."/>
            <person name="Chen R."/>
            <person name="Ma D."/>
            <person name="Qiang B."/>
            <person name="Wen Y."/>
            <person name="Hou Y."/>
            <person name="Yu J."/>
        </authorList>
    </citation>
    <scope>NUCLEOTIDE SEQUENCE [LARGE SCALE GENOMIC DNA]</scope>
    <source>
        <strain>301 / Serotype 2a</strain>
    </source>
</reference>
<reference key="2">
    <citation type="journal article" date="2003" name="Infect. Immun.">
        <title>Complete genome sequence and comparative genomics of Shigella flexneri serotype 2a strain 2457T.</title>
        <authorList>
            <person name="Wei J."/>
            <person name="Goldberg M.B."/>
            <person name="Burland V."/>
            <person name="Venkatesan M.M."/>
            <person name="Deng W."/>
            <person name="Fournier G."/>
            <person name="Mayhew G.F."/>
            <person name="Plunkett G. III"/>
            <person name="Rose D.J."/>
            <person name="Darling A."/>
            <person name="Mau B."/>
            <person name="Perna N.T."/>
            <person name="Payne S.M."/>
            <person name="Runyen-Janecky L.J."/>
            <person name="Zhou S."/>
            <person name="Schwartz D.C."/>
            <person name="Blattner F.R."/>
        </authorList>
    </citation>
    <scope>NUCLEOTIDE SEQUENCE [LARGE SCALE GENOMIC DNA]</scope>
    <source>
        <strain>ATCC 700930 / 2457T / Serotype 2a</strain>
    </source>
</reference>
<evidence type="ECO:0000255" key="1">
    <source>
        <dbReference type="HAMAP-Rule" id="MF_00379"/>
    </source>
</evidence>
<organism>
    <name type="scientific">Shigella flexneri</name>
    <dbReference type="NCBI Taxonomy" id="623"/>
    <lineage>
        <taxon>Bacteria</taxon>
        <taxon>Pseudomonadati</taxon>
        <taxon>Pseudomonadota</taxon>
        <taxon>Gammaproteobacteria</taxon>
        <taxon>Enterobacterales</taxon>
        <taxon>Enterobacteriaceae</taxon>
        <taxon>Shigella</taxon>
    </lineage>
</organism>
<protein>
    <recommendedName>
        <fullName evidence="1">tRNA modification GTPase MnmE</fullName>
        <ecNumber evidence="1">3.6.-.-</ecNumber>
    </recommendedName>
</protein>
<feature type="chain" id="PRO_0000188914" description="tRNA modification GTPase MnmE">
    <location>
        <begin position="1"/>
        <end position="454"/>
    </location>
</feature>
<feature type="domain" description="TrmE-type G">
    <location>
        <begin position="216"/>
        <end position="377"/>
    </location>
</feature>
<feature type="binding site" evidence="1">
    <location>
        <position position="23"/>
    </location>
    <ligand>
        <name>(6S)-5-formyl-5,6,7,8-tetrahydrofolate</name>
        <dbReference type="ChEBI" id="CHEBI:57457"/>
    </ligand>
</feature>
<feature type="binding site" evidence="1">
    <location>
        <position position="80"/>
    </location>
    <ligand>
        <name>(6S)-5-formyl-5,6,7,8-tetrahydrofolate</name>
        <dbReference type="ChEBI" id="CHEBI:57457"/>
    </ligand>
</feature>
<feature type="binding site" evidence="1">
    <location>
        <position position="120"/>
    </location>
    <ligand>
        <name>(6S)-5-formyl-5,6,7,8-tetrahydrofolate</name>
        <dbReference type="ChEBI" id="CHEBI:57457"/>
    </ligand>
</feature>
<feature type="binding site" evidence="1">
    <location>
        <begin position="226"/>
        <end position="231"/>
    </location>
    <ligand>
        <name>GTP</name>
        <dbReference type="ChEBI" id="CHEBI:37565"/>
    </ligand>
</feature>
<feature type="binding site" evidence="1">
    <location>
        <position position="226"/>
    </location>
    <ligand>
        <name>K(+)</name>
        <dbReference type="ChEBI" id="CHEBI:29103"/>
    </ligand>
</feature>
<feature type="binding site" evidence="1">
    <location>
        <position position="230"/>
    </location>
    <ligand>
        <name>Mg(2+)</name>
        <dbReference type="ChEBI" id="CHEBI:18420"/>
    </ligand>
</feature>
<feature type="binding site" evidence="1">
    <location>
        <begin position="245"/>
        <end position="251"/>
    </location>
    <ligand>
        <name>GTP</name>
        <dbReference type="ChEBI" id="CHEBI:37565"/>
    </ligand>
</feature>
<feature type="binding site" evidence="1">
    <location>
        <position position="245"/>
    </location>
    <ligand>
        <name>K(+)</name>
        <dbReference type="ChEBI" id="CHEBI:29103"/>
    </ligand>
</feature>
<feature type="binding site" evidence="1">
    <location>
        <position position="247"/>
    </location>
    <ligand>
        <name>K(+)</name>
        <dbReference type="ChEBI" id="CHEBI:29103"/>
    </ligand>
</feature>
<feature type="binding site" evidence="1">
    <location>
        <position position="250"/>
    </location>
    <ligand>
        <name>K(+)</name>
        <dbReference type="ChEBI" id="CHEBI:29103"/>
    </ligand>
</feature>
<feature type="binding site" evidence="1">
    <location>
        <position position="251"/>
    </location>
    <ligand>
        <name>Mg(2+)</name>
        <dbReference type="ChEBI" id="CHEBI:18420"/>
    </ligand>
</feature>
<feature type="binding site" evidence="1">
    <location>
        <begin position="270"/>
        <end position="273"/>
    </location>
    <ligand>
        <name>GTP</name>
        <dbReference type="ChEBI" id="CHEBI:37565"/>
    </ligand>
</feature>
<feature type="binding site" evidence="1">
    <location>
        <begin position="335"/>
        <end position="338"/>
    </location>
    <ligand>
        <name>GTP</name>
        <dbReference type="ChEBI" id="CHEBI:37565"/>
    </ligand>
</feature>
<feature type="binding site" evidence="1">
    <location>
        <begin position="358"/>
        <end position="360"/>
    </location>
    <ligand>
        <name>GTP</name>
        <dbReference type="ChEBI" id="CHEBI:37565"/>
    </ligand>
</feature>
<feature type="binding site" evidence="1">
    <location>
        <position position="454"/>
    </location>
    <ligand>
        <name>(6S)-5-formyl-5,6,7,8-tetrahydrofolate</name>
        <dbReference type="ChEBI" id="CHEBI:57457"/>
    </ligand>
</feature>